<dbReference type="EC" id="3.1.21.10" evidence="1"/>
<dbReference type="EMBL" id="CP000884">
    <property type="protein sequence ID" value="ABX34124.1"/>
    <property type="molecule type" value="Genomic_DNA"/>
</dbReference>
<dbReference type="RefSeq" id="WP_012203410.1">
    <property type="nucleotide sequence ID" value="NC_010002.1"/>
</dbReference>
<dbReference type="SMR" id="A9BUL6"/>
<dbReference type="STRING" id="398578.Daci_1480"/>
<dbReference type="GeneID" id="24118330"/>
<dbReference type="KEGG" id="dac:Daci_1480"/>
<dbReference type="eggNOG" id="COG0817">
    <property type="taxonomic scope" value="Bacteria"/>
</dbReference>
<dbReference type="HOGENOM" id="CLU_091257_3_1_4"/>
<dbReference type="Proteomes" id="UP000000784">
    <property type="component" value="Chromosome"/>
</dbReference>
<dbReference type="GO" id="GO:0005737">
    <property type="term" value="C:cytoplasm"/>
    <property type="evidence" value="ECO:0007669"/>
    <property type="project" value="UniProtKB-SubCell"/>
</dbReference>
<dbReference type="GO" id="GO:0048476">
    <property type="term" value="C:Holliday junction resolvase complex"/>
    <property type="evidence" value="ECO:0007669"/>
    <property type="project" value="UniProtKB-UniRule"/>
</dbReference>
<dbReference type="GO" id="GO:0008821">
    <property type="term" value="F:crossover junction DNA endonuclease activity"/>
    <property type="evidence" value="ECO:0007669"/>
    <property type="project" value="UniProtKB-UniRule"/>
</dbReference>
<dbReference type="GO" id="GO:0003677">
    <property type="term" value="F:DNA binding"/>
    <property type="evidence" value="ECO:0007669"/>
    <property type="project" value="UniProtKB-KW"/>
</dbReference>
<dbReference type="GO" id="GO:0000287">
    <property type="term" value="F:magnesium ion binding"/>
    <property type="evidence" value="ECO:0007669"/>
    <property type="project" value="UniProtKB-UniRule"/>
</dbReference>
<dbReference type="GO" id="GO:0006310">
    <property type="term" value="P:DNA recombination"/>
    <property type="evidence" value="ECO:0007669"/>
    <property type="project" value="UniProtKB-UniRule"/>
</dbReference>
<dbReference type="GO" id="GO:0006281">
    <property type="term" value="P:DNA repair"/>
    <property type="evidence" value="ECO:0007669"/>
    <property type="project" value="UniProtKB-UniRule"/>
</dbReference>
<dbReference type="CDD" id="cd16962">
    <property type="entry name" value="RuvC"/>
    <property type="match status" value="1"/>
</dbReference>
<dbReference type="FunFam" id="3.30.420.10:FF:000002">
    <property type="entry name" value="Crossover junction endodeoxyribonuclease RuvC"/>
    <property type="match status" value="1"/>
</dbReference>
<dbReference type="Gene3D" id="3.30.420.10">
    <property type="entry name" value="Ribonuclease H-like superfamily/Ribonuclease H"/>
    <property type="match status" value="1"/>
</dbReference>
<dbReference type="HAMAP" id="MF_00034">
    <property type="entry name" value="RuvC"/>
    <property type="match status" value="1"/>
</dbReference>
<dbReference type="InterPro" id="IPR012337">
    <property type="entry name" value="RNaseH-like_sf"/>
</dbReference>
<dbReference type="InterPro" id="IPR036397">
    <property type="entry name" value="RNaseH_sf"/>
</dbReference>
<dbReference type="InterPro" id="IPR020563">
    <property type="entry name" value="X-over_junc_endoDNase_Mg_BS"/>
</dbReference>
<dbReference type="InterPro" id="IPR002176">
    <property type="entry name" value="X-over_junc_endoDNase_RuvC"/>
</dbReference>
<dbReference type="NCBIfam" id="TIGR00228">
    <property type="entry name" value="ruvC"/>
    <property type="match status" value="1"/>
</dbReference>
<dbReference type="PANTHER" id="PTHR30194">
    <property type="entry name" value="CROSSOVER JUNCTION ENDODEOXYRIBONUCLEASE RUVC"/>
    <property type="match status" value="1"/>
</dbReference>
<dbReference type="PANTHER" id="PTHR30194:SF3">
    <property type="entry name" value="CROSSOVER JUNCTION ENDODEOXYRIBONUCLEASE RUVC"/>
    <property type="match status" value="1"/>
</dbReference>
<dbReference type="Pfam" id="PF02075">
    <property type="entry name" value="RuvC"/>
    <property type="match status" value="1"/>
</dbReference>
<dbReference type="PRINTS" id="PR00696">
    <property type="entry name" value="RSOLVASERUVC"/>
</dbReference>
<dbReference type="SUPFAM" id="SSF53098">
    <property type="entry name" value="Ribonuclease H-like"/>
    <property type="match status" value="1"/>
</dbReference>
<dbReference type="PROSITE" id="PS01321">
    <property type="entry name" value="RUVC"/>
    <property type="match status" value="1"/>
</dbReference>
<evidence type="ECO:0000255" key="1">
    <source>
        <dbReference type="HAMAP-Rule" id="MF_00034"/>
    </source>
</evidence>
<comment type="function">
    <text evidence="1">The RuvA-RuvB-RuvC complex processes Holliday junction (HJ) DNA during genetic recombination and DNA repair. Endonuclease that resolves HJ intermediates. Cleaves cruciform DNA by making single-stranded nicks across the HJ at symmetrical positions within the homologous arms, yielding a 5'-phosphate and a 3'-hydroxyl group; requires a central core of homology in the junction. The consensus cleavage sequence is 5'-(A/T)TT(C/G)-3'. Cleavage occurs on the 3'-side of the TT dinucleotide at the point of strand exchange. HJ branch migration catalyzed by RuvA-RuvB allows RuvC to scan DNA until it finds its consensus sequence, where it cleaves and resolves the cruciform DNA.</text>
</comment>
<comment type="catalytic activity">
    <reaction evidence="1">
        <text>Endonucleolytic cleavage at a junction such as a reciprocal single-stranded crossover between two homologous DNA duplexes (Holliday junction).</text>
        <dbReference type="EC" id="3.1.21.10"/>
    </reaction>
</comment>
<comment type="cofactor">
    <cofactor evidence="1">
        <name>Mg(2+)</name>
        <dbReference type="ChEBI" id="CHEBI:18420"/>
    </cofactor>
    <text evidence="1">Binds 2 Mg(2+) ion per subunit.</text>
</comment>
<comment type="subunit">
    <text evidence="1">Homodimer which binds Holliday junction (HJ) DNA. The HJ becomes 2-fold symmetrical on binding to RuvC with unstacked arms; it has a different conformation from HJ DNA in complex with RuvA. In the full resolvosome a probable DNA-RuvA(4)-RuvB(12)-RuvC(2) complex forms which resolves the HJ.</text>
</comment>
<comment type="subcellular location">
    <subcellularLocation>
        <location evidence="1">Cytoplasm</location>
    </subcellularLocation>
</comment>
<comment type="similarity">
    <text evidence="1">Belongs to the RuvC family.</text>
</comment>
<proteinExistence type="inferred from homology"/>
<accession>A9BUL6</accession>
<name>RUVC_DELAS</name>
<gene>
    <name evidence="1" type="primary">ruvC</name>
    <name type="ordered locus">Daci_1480</name>
</gene>
<organism>
    <name type="scientific">Delftia acidovorans (strain DSM 14801 / SPH-1)</name>
    <dbReference type="NCBI Taxonomy" id="398578"/>
    <lineage>
        <taxon>Bacteria</taxon>
        <taxon>Pseudomonadati</taxon>
        <taxon>Pseudomonadota</taxon>
        <taxon>Betaproteobacteria</taxon>
        <taxon>Burkholderiales</taxon>
        <taxon>Comamonadaceae</taxon>
        <taxon>Delftia</taxon>
    </lineage>
</organism>
<sequence>MRILGIDPGLQTTGFGVIDVDGHRLAYVASGTIRTTGIALGDLPGRLKLLFDGISEVASRYQPDTSAVEIVFVNVNPQSTLLLGQARGAALTALVNAGLPVAEYTALQMKKAMTGHGRAAKSQIQEMVRRLLQLPGLPGTDAADALGLAITHAHAGAAMSKMAEVTQLQRRQHAVYKGGRVY</sequence>
<protein>
    <recommendedName>
        <fullName evidence="1">Crossover junction endodeoxyribonuclease RuvC</fullName>
        <ecNumber evidence="1">3.1.21.10</ecNumber>
    </recommendedName>
    <alternativeName>
        <fullName evidence="1">Holliday junction nuclease RuvC</fullName>
    </alternativeName>
    <alternativeName>
        <fullName evidence="1">Holliday junction resolvase RuvC</fullName>
    </alternativeName>
</protein>
<keyword id="KW-0963">Cytoplasm</keyword>
<keyword id="KW-0227">DNA damage</keyword>
<keyword id="KW-0233">DNA recombination</keyword>
<keyword id="KW-0234">DNA repair</keyword>
<keyword id="KW-0238">DNA-binding</keyword>
<keyword id="KW-0255">Endonuclease</keyword>
<keyword id="KW-0378">Hydrolase</keyword>
<keyword id="KW-0460">Magnesium</keyword>
<keyword id="KW-0479">Metal-binding</keyword>
<keyword id="KW-0540">Nuclease</keyword>
<keyword id="KW-1185">Reference proteome</keyword>
<feature type="chain" id="PRO_1000090520" description="Crossover junction endodeoxyribonuclease RuvC">
    <location>
        <begin position="1"/>
        <end position="182"/>
    </location>
</feature>
<feature type="active site" evidence="1">
    <location>
        <position position="7"/>
    </location>
</feature>
<feature type="active site" evidence="1">
    <location>
        <position position="69"/>
    </location>
</feature>
<feature type="active site" evidence="1">
    <location>
        <position position="141"/>
    </location>
</feature>
<feature type="binding site" evidence="1">
    <location>
        <position position="7"/>
    </location>
    <ligand>
        <name>Mg(2+)</name>
        <dbReference type="ChEBI" id="CHEBI:18420"/>
        <label>1</label>
    </ligand>
</feature>
<feature type="binding site" evidence="1">
    <location>
        <position position="69"/>
    </location>
    <ligand>
        <name>Mg(2+)</name>
        <dbReference type="ChEBI" id="CHEBI:18420"/>
        <label>2</label>
    </ligand>
</feature>
<feature type="binding site" evidence="1">
    <location>
        <position position="141"/>
    </location>
    <ligand>
        <name>Mg(2+)</name>
        <dbReference type="ChEBI" id="CHEBI:18420"/>
        <label>1</label>
    </ligand>
</feature>
<reference key="1">
    <citation type="submission" date="2007-11" db="EMBL/GenBank/DDBJ databases">
        <title>Complete sequence of Delftia acidovorans DSM 14801 / SPH-1.</title>
        <authorList>
            <person name="Copeland A."/>
            <person name="Lucas S."/>
            <person name="Lapidus A."/>
            <person name="Barry K."/>
            <person name="Glavina del Rio T."/>
            <person name="Dalin E."/>
            <person name="Tice H."/>
            <person name="Pitluck S."/>
            <person name="Lowry S."/>
            <person name="Clum A."/>
            <person name="Schmutz J."/>
            <person name="Larimer F."/>
            <person name="Land M."/>
            <person name="Hauser L."/>
            <person name="Kyrpides N."/>
            <person name="Kim E."/>
            <person name="Schleheck D."/>
            <person name="Richardson P."/>
        </authorList>
    </citation>
    <scope>NUCLEOTIDE SEQUENCE [LARGE SCALE GENOMIC DNA]</scope>
    <source>
        <strain>DSM 14801 / SPH-1</strain>
    </source>
</reference>